<name>DPPA5_PSEAB</name>
<sequence>MRLAAFSLFLAPLLLAQPAAAATLSVCTEASPEGFDVVQYNSLTTTNASADVLMNRLVEFDAGKGTVVPSLAERWSVSDDGLSYRFDLRQGVHFHSTAYFKPSRTLDADDVVFSFQRMLDPANPWHKVAQNGFPHAQSMQLPELIKRVEKSGDHQVLIVLDHPDATFLPMLSMGFASIYSAEYADQLMKAGTPEKLNTAPIGSGPFVFKRFQKDAVVRYAANPEYFAGKPAVDALIFAITPDANVRLQKLRRGECQIALSPKPLDVESARKDASLKVEQTPAFMTAFVALNTQHPPLDDPKVRQAINLAFDRTSYLQAVFEGSASAATGIYPPNTWSYARDIPAYPHDPEQARKLLAGKQLPELNIWTRPSGSLLNPNPSLGAQLLQADLAEAGIKANIRVIEWGELIRRAKNGEHDLLFMGWAGDNGDPDNFLTPQFSCASVKSGLNFARYCDPGLDKLIADGKAASSQEQRTGLYHQAQKLIHEQALWLPLAHPTAFALTRQEVQGYQVNPFGRQDFSRVAVKR</sequence>
<protein>
    <recommendedName>
        <fullName evidence="4">Probable di/tripeptide-binding protein 5</fullName>
    </recommendedName>
</protein>
<evidence type="ECO:0000255" key="1"/>
<evidence type="ECO:0000269" key="2">
    <source>
    </source>
</evidence>
<evidence type="ECO:0000303" key="3">
    <source>
    </source>
</evidence>
<evidence type="ECO:0000305" key="4"/>
<evidence type="ECO:0000305" key="5">
    <source>
    </source>
</evidence>
<evidence type="ECO:0000312" key="6">
    <source>
        <dbReference type="EMBL" id="ABJ14700.1"/>
    </source>
</evidence>
<keyword id="KW-0571">Peptide transport</keyword>
<keyword id="KW-0653">Protein transport</keyword>
<keyword id="KW-0732">Signal</keyword>
<keyword id="KW-0813">Transport</keyword>
<proteinExistence type="evidence at protein level"/>
<dbReference type="EMBL" id="CP000438">
    <property type="protein sequence ID" value="ABJ14700.1"/>
    <property type="molecule type" value="Genomic_DNA"/>
</dbReference>
<dbReference type="RefSeq" id="WP_003096557.1">
    <property type="nucleotide sequence ID" value="NZ_CP034244.1"/>
</dbReference>
<dbReference type="SMR" id="A0A0H2ZI72"/>
<dbReference type="KEGG" id="pau:PA14_70200"/>
<dbReference type="HOGENOM" id="CLU_017028_7_0_6"/>
<dbReference type="BioCyc" id="PAER208963:G1G74-5911-MONOMER"/>
<dbReference type="Proteomes" id="UP000000653">
    <property type="component" value="Chromosome"/>
</dbReference>
<dbReference type="GO" id="GO:0043190">
    <property type="term" value="C:ATP-binding cassette (ABC) transporter complex"/>
    <property type="evidence" value="ECO:0007669"/>
    <property type="project" value="InterPro"/>
</dbReference>
<dbReference type="GO" id="GO:0030288">
    <property type="term" value="C:outer membrane-bounded periplasmic space"/>
    <property type="evidence" value="ECO:0007669"/>
    <property type="project" value="TreeGrafter"/>
</dbReference>
<dbReference type="GO" id="GO:1904680">
    <property type="term" value="F:peptide transmembrane transporter activity"/>
    <property type="evidence" value="ECO:0007669"/>
    <property type="project" value="TreeGrafter"/>
</dbReference>
<dbReference type="GO" id="GO:0042938">
    <property type="term" value="P:dipeptide transport"/>
    <property type="evidence" value="ECO:0007669"/>
    <property type="project" value="TreeGrafter"/>
</dbReference>
<dbReference type="GO" id="GO:0015031">
    <property type="term" value="P:protein transport"/>
    <property type="evidence" value="ECO:0007669"/>
    <property type="project" value="UniProtKB-KW"/>
</dbReference>
<dbReference type="CDD" id="cd08493">
    <property type="entry name" value="PBP2_DppA_like"/>
    <property type="match status" value="1"/>
</dbReference>
<dbReference type="FunFam" id="3.40.190.10:FF:000036">
    <property type="entry name" value="Dipeptide ABC transporter, substrate-binding protein"/>
    <property type="match status" value="1"/>
</dbReference>
<dbReference type="Gene3D" id="3.90.76.10">
    <property type="entry name" value="Dipeptide-binding Protein, Domain 1"/>
    <property type="match status" value="1"/>
</dbReference>
<dbReference type="Gene3D" id="3.10.105.10">
    <property type="entry name" value="Dipeptide-binding Protein, Domain 3"/>
    <property type="match status" value="1"/>
</dbReference>
<dbReference type="Gene3D" id="3.40.190.10">
    <property type="entry name" value="Periplasmic binding protein-like II"/>
    <property type="match status" value="1"/>
</dbReference>
<dbReference type="InterPro" id="IPR030678">
    <property type="entry name" value="Peptide/Ni-bd"/>
</dbReference>
<dbReference type="InterPro" id="IPR039424">
    <property type="entry name" value="SBP_5"/>
</dbReference>
<dbReference type="InterPro" id="IPR000914">
    <property type="entry name" value="SBP_5_dom"/>
</dbReference>
<dbReference type="PANTHER" id="PTHR30290:SF38">
    <property type="entry name" value="D,D-DIPEPTIDE-BINDING PERIPLASMIC PROTEIN DDPA-RELATED"/>
    <property type="match status" value="1"/>
</dbReference>
<dbReference type="PANTHER" id="PTHR30290">
    <property type="entry name" value="PERIPLASMIC BINDING COMPONENT OF ABC TRANSPORTER"/>
    <property type="match status" value="1"/>
</dbReference>
<dbReference type="Pfam" id="PF00496">
    <property type="entry name" value="SBP_bac_5"/>
    <property type="match status" value="1"/>
</dbReference>
<dbReference type="PIRSF" id="PIRSF002741">
    <property type="entry name" value="MppA"/>
    <property type="match status" value="1"/>
</dbReference>
<dbReference type="SUPFAM" id="SSF53850">
    <property type="entry name" value="Periplasmic binding protein-like II"/>
    <property type="match status" value="1"/>
</dbReference>
<accession>A0A0H2ZI72</accession>
<gene>
    <name evidence="3" type="primary">dppA5</name>
    <name evidence="6" type="ordered locus">PA14_70200</name>
</gene>
<organism>
    <name type="scientific">Pseudomonas aeruginosa (strain UCBPP-PA14)</name>
    <dbReference type="NCBI Taxonomy" id="208963"/>
    <lineage>
        <taxon>Bacteria</taxon>
        <taxon>Pseudomonadati</taxon>
        <taxon>Pseudomonadota</taxon>
        <taxon>Gammaproteobacteria</taxon>
        <taxon>Pseudomonadales</taxon>
        <taxon>Pseudomonadaceae</taxon>
        <taxon>Pseudomonas</taxon>
    </lineage>
</organism>
<comment type="function">
    <text evidence="5">Part of the ABC transporter DppABCDF involved in the uptake of various di/tripeptides.</text>
</comment>
<comment type="subunit">
    <text evidence="2 5">The complex is composed of two ATP-binding proteins (DppD and DppF), two transmembrane proteins (DppB and DppC) and a solute-binding protein (DppA5) (Probable). Five orthologous SBPs (DppA1-A5) are present in P.aeruginosa, which increases the substrate specificity of the DppBCDF transporter (PubMed:25338022).</text>
</comment>
<comment type="miscellaneous">
    <text evidence="2">DppA5 was not able to complement the DppA1-A5 penta mutant during high-throughput screening.</text>
</comment>
<comment type="similarity">
    <text evidence="4">Belongs to the bacterial solute-binding protein 5 family.</text>
</comment>
<reference key="1">
    <citation type="journal article" date="2006" name="Genome Biol.">
        <title>Genomic analysis reveals that Pseudomonas aeruginosa virulence is combinatorial.</title>
        <authorList>
            <person name="Lee D.G."/>
            <person name="Urbach J.M."/>
            <person name="Wu G."/>
            <person name="Liberati N.T."/>
            <person name="Feinbaum R.L."/>
            <person name="Miyata S."/>
            <person name="Diggins L.T."/>
            <person name="He J."/>
            <person name="Saucier M."/>
            <person name="Deziel E."/>
            <person name="Friedman L."/>
            <person name="Li L."/>
            <person name="Grills G."/>
            <person name="Montgomery K."/>
            <person name="Kucherlapati R."/>
            <person name="Rahme L.G."/>
            <person name="Ausubel F.M."/>
        </authorList>
    </citation>
    <scope>NUCLEOTIDE SEQUENCE [LARGE SCALE GENOMIC DNA]</scope>
    <source>
        <strain>UCBPP-PA14</strain>
    </source>
</reference>
<reference key="2">
    <citation type="journal article" date="2014" name="PLoS ONE">
        <title>High-throughput screening of dipeptide utilization mediated by the ABC transporter DppBCDF and its substrate-binding proteins DppA1-A5 in Pseudomonas aeruginosa.</title>
        <authorList>
            <person name="Pletzer D."/>
            <person name="Lafon C."/>
            <person name="Braun Y."/>
            <person name="Koehler T."/>
            <person name="Page M.G."/>
            <person name="Mourez M."/>
            <person name="Weingart H."/>
        </authorList>
    </citation>
    <scope>FUNCTION</scope>
    <scope>SUBUNIT</scope>
    <source>
        <strain>UCBPP-PA14</strain>
    </source>
</reference>
<feature type="signal peptide" evidence="1">
    <location>
        <begin position="1"/>
        <end position="21"/>
    </location>
</feature>
<feature type="chain" id="PRO_0000452192" description="Probable di/tripeptide-binding protein 5">
    <location>
        <begin position="22"/>
        <end position="526"/>
    </location>
</feature>